<keyword id="KW-0067">ATP-binding</keyword>
<keyword id="KW-0156">Chromatin regulator</keyword>
<keyword id="KW-0175">Coiled coil</keyword>
<keyword id="KW-0227">DNA damage</keyword>
<keyword id="KW-0234">DNA repair</keyword>
<keyword id="KW-0238">DNA-binding</keyword>
<keyword id="KW-0255">Endonuclease</keyword>
<keyword id="KW-0378">Hydrolase</keyword>
<keyword id="KW-0418">Kinase</keyword>
<keyword id="KW-0540">Nuclease</keyword>
<keyword id="KW-0547">Nucleotide-binding</keyword>
<keyword id="KW-0539">Nucleus</keyword>
<keyword id="KW-0611">Plant defense</keyword>
<keyword id="KW-1185">Reference proteome</keyword>
<keyword id="KW-0694">RNA-binding</keyword>
<keyword id="KW-0943">RNA-mediated gene silencing</keyword>
<keyword id="KW-0808">Transferase</keyword>
<reference key="1">
    <citation type="journal article" date="1999" name="Nature">
        <title>Sequence and analysis of chromosome 4 of the plant Arabidopsis thaliana.</title>
        <authorList>
            <person name="Mayer K.F.X."/>
            <person name="Schueller C."/>
            <person name="Wambutt R."/>
            <person name="Murphy G."/>
            <person name="Volckaert G."/>
            <person name="Pohl T."/>
            <person name="Duesterhoeft A."/>
            <person name="Stiekema W."/>
            <person name="Entian K.-D."/>
            <person name="Terryn N."/>
            <person name="Harris B."/>
            <person name="Ansorge W."/>
            <person name="Brandt P."/>
            <person name="Grivell L.A."/>
            <person name="Rieger M."/>
            <person name="Weichselgartner M."/>
            <person name="de Simone V."/>
            <person name="Obermaier B."/>
            <person name="Mache R."/>
            <person name="Mueller M."/>
            <person name="Kreis M."/>
            <person name="Delseny M."/>
            <person name="Puigdomenech P."/>
            <person name="Watson M."/>
            <person name="Schmidtheini T."/>
            <person name="Reichert B."/>
            <person name="Portetelle D."/>
            <person name="Perez-Alonso M."/>
            <person name="Boutry M."/>
            <person name="Bancroft I."/>
            <person name="Vos P."/>
            <person name="Hoheisel J."/>
            <person name="Zimmermann W."/>
            <person name="Wedler H."/>
            <person name="Ridley P."/>
            <person name="Langham S.-A."/>
            <person name="McCullagh B."/>
            <person name="Bilham L."/>
            <person name="Robben J."/>
            <person name="van der Schueren J."/>
            <person name="Grymonprez B."/>
            <person name="Chuang Y.-J."/>
            <person name="Vandenbussche F."/>
            <person name="Braeken M."/>
            <person name="Weltjens I."/>
            <person name="Voet M."/>
            <person name="Bastiaens I."/>
            <person name="Aert R."/>
            <person name="Defoor E."/>
            <person name="Weitzenegger T."/>
            <person name="Bothe G."/>
            <person name="Ramsperger U."/>
            <person name="Hilbert H."/>
            <person name="Braun M."/>
            <person name="Holzer E."/>
            <person name="Brandt A."/>
            <person name="Peters S."/>
            <person name="van Staveren M."/>
            <person name="Dirkse W."/>
            <person name="Mooijman P."/>
            <person name="Klein Lankhorst R."/>
            <person name="Rose M."/>
            <person name="Hauf J."/>
            <person name="Koetter P."/>
            <person name="Berneiser S."/>
            <person name="Hempel S."/>
            <person name="Feldpausch M."/>
            <person name="Lamberth S."/>
            <person name="Van den Daele H."/>
            <person name="De Keyser A."/>
            <person name="Buysshaert C."/>
            <person name="Gielen J."/>
            <person name="Villarroel R."/>
            <person name="De Clercq R."/>
            <person name="van Montagu M."/>
            <person name="Rogers J."/>
            <person name="Cronin A."/>
            <person name="Quail M.A."/>
            <person name="Bray-Allen S."/>
            <person name="Clark L."/>
            <person name="Doggett J."/>
            <person name="Hall S."/>
            <person name="Kay M."/>
            <person name="Lennard N."/>
            <person name="McLay K."/>
            <person name="Mayes R."/>
            <person name="Pettett A."/>
            <person name="Rajandream M.A."/>
            <person name="Lyne M."/>
            <person name="Benes V."/>
            <person name="Rechmann S."/>
            <person name="Borkova D."/>
            <person name="Bloecker H."/>
            <person name="Scharfe M."/>
            <person name="Grimm M."/>
            <person name="Loehnert T.-H."/>
            <person name="Dose S."/>
            <person name="de Haan M."/>
            <person name="Maarse A.C."/>
            <person name="Schaefer M."/>
            <person name="Mueller-Auer S."/>
            <person name="Gabel C."/>
            <person name="Fuchs M."/>
            <person name="Fartmann B."/>
            <person name="Granderath K."/>
            <person name="Dauner D."/>
            <person name="Herzl A."/>
            <person name="Neumann S."/>
            <person name="Argiriou A."/>
            <person name="Vitale D."/>
            <person name="Liguori R."/>
            <person name="Piravandi E."/>
            <person name="Massenet O."/>
            <person name="Quigley F."/>
            <person name="Clabauld G."/>
            <person name="Muendlein A."/>
            <person name="Felber R."/>
            <person name="Schnabl S."/>
            <person name="Hiller R."/>
            <person name="Schmidt W."/>
            <person name="Lecharny A."/>
            <person name="Aubourg S."/>
            <person name="Chefdor F."/>
            <person name="Cooke R."/>
            <person name="Berger C."/>
            <person name="Monfort A."/>
            <person name="Casacuberta E."/>
            <person name="Gibbons T."/>
            <person name="Weber N."/>
            <person name="Vandenbol M."/>
            <person name="Bargues M."/>
            <person name="Terol J."/>
            <person name="Torres A."/>
            <person name="Perez-Perez A."/>
            <person name="Purnelle B."/>
            <person name="Bent E."/>
            <person name="Johnson S."/>
            <person name="Tacon D."/>
            <person name="Jesse T."/>
            <person name="Heijnen L."/>
            <person name="Schwarz S."/>
            <person name="Scholler P."/>
            <person name="Heber S."/>
            <person name="Francs P."/>
            <person name="Bielke C."/>
            <person name="Frishman D."/>
            <person name="Haase D."/>
            <person name="Lemcke K."/>
            <person name="Mewes H.-W."/>
            <person name="Stocker S."/>
            <person name="Zaccaria P."/>
            <person name="Bevan M."/>
            <person name="Wilson R.K."/>
            <person name="de la Bastide M."/>
            <person name="Habermann K."/>
            <person name="Parnell L."/>
            <person name="Dedhia N."/>
            <person name="Gnoj L."/>
            <person name="Schutz K."/>
            <person name="Huang E."/>
            <person name="Spiegel L."/>
            <person name="Sekhon M."/>
            <person name="Murray J."/>
            <person name="Sheet P."/>
            <person name="Cordes M."/>
            <person name="Abu-Threideh J."/>
            <person name="Stoneking T."/>
            <person name="Kalicki J."/>
            <person name="Graves T."/>
            <person name="Harmon G."/>
            <person name="Edwards J."/>
            <person name="Latreille P."/>
            <person name="Courtney L."/>
            <person name="Cloud J."/>
            <person name="Abbott A."/>
            <person name="Scott K."/>
            <person name="Johnson D."/>
            <person name="Minx P."/>
            <person name="Bentley D."/>
            <person name="Fulton B."/>
            <person name="Miller N."/>
            <person name="Greco T."/>
            <person name="Kemp K."/>
            <person name="Kramer J."/>
            <person name="Fulton L."/>
            <person name="Mardis E."/>
            <person name="Dante M."/>
            <person name="Pepin K."/>
            <person name="Hillier L.W."/>
            <person name="Nelson J."/>
            <person name="Spieth J."/>
            <person name="Ryan E."/>
            <person name="Andrews S."/>
            <person name="Geisel C."/>
            <person name="Layman D."/>
            <person name="Du H."/>
            <person name="Ali J."/>
            <person name="Berghoff A."/>
            <person name="Jones K."/>
            <person name="Drone K."/>
            <person name="Cotton M."/>
            <person name="Joshu C."/>
            <person name="Antonoiu B."/>
            <person name="Zidanic M."/>
            <person name="Strong C."/>
            <person name="Sun H."/>
            <person name="Lamar B."/>
            <person name="Yordan C."/>
            <person name="Ma P."/>
            <person name="Zhong J."/>
            <person name="Preston R."/>
            <person name="Vil D."/>
            <person name="Shekher M."/>
            <person name="Matero A."/>
            <person name="Shah R."/>
            <person name="Swaby I.K."/>
            <person name="O'Shaughnessy A."/>
            <person name="Rodriguez M."/>
            <person name="Hoffman J."/>
            <person name="Till S."/>
            <person name="Granat S."/>
            <person name="Shohdy N."/>
            <person name="Hasegawa A."/>
            <person name="Hameed A."/>
            <person name="Lodhi M."/>
            <person name="Johnson A."/>
            <person name="Chen E."/>
            <person name="Marra M.A."/>
            <person name="Martienssen R."/>
            <person name="McCombie W.R."/>
        </authorList>
    </citation>
    <scope>NUCLEOTIDE SEQUENCE [LARGE SCALE GENOMIC DNA]</scope>
    <source>
        <strain>cv. Columbia</strain>
    </source>
</reference>
<reference key="2">
    <citation type="journal article" date="2017" name="Plant J.">
        <title>Araport11: a complete reannotation of the Arabidopsis thaliana reference genome.</title>
        <authorList>
            <person name="Cheng C.Y."/>
            <person name="Krishnakumar V."/>
            <person name="Chan A.P."/>
            <person name="Thibaud-Nissen F."/>
            <person name="Schobel S."/>
            <person name="Town C.D."/>
        </authorList>
    </citation>
    <scope>GENOME REANNOTATION</scope>
    <source>
        <strain>cv. Columbia</strain>
    </source>
</reference>
<reference key="3">
    <citation type="journal article" date="2008" name="Plant Signal. Behav.">
        <title>The involvement of the Arabidopsis CRT1 ATPase family in disease resistance protein-mediated signaling.</title>
        <authorList>
            <person name="Kang H.-G."/>
            <person name="Klessig D.F."/>
        </authorList>
    </citation>
    <scope>GENE FAMILY</scope>
    <scope>NOMENCLATURE</scope>
</reference>
<reference key="4">
    <citation type="journal article" date="2014" name="Proc. Natl. Acad. Sci. U.S.A.">
        <title>Transcriptional gene silencing by Arabidopsis microrchidia homologues involves the formation of heteromers.</title>
        <authorList>
            <person name="Moissiard G."/>
            <person name="Bischof S."/>
            <person name="Husmann D."/>
            <person name="Pastor W.A."/>
            <person name="Hale C.J."/>
            <person name="Yen L."/>
            <person name="Stroud H."/>
            <person name="Papikian A."/>
            <person name="Vashisht A.A."/>
            <person name="Wohlschlegel J.A."/>
            <person name="Jacobsen S.E."/>
        </authorList>
    </citation>
    <scope>GENE FAMILY</scope>
    <scope>NOMENCLATURE</scope>
</reference>
<reference key="5">
    <citation type="journal article" date="2016" name="PLoS Genet.">
        <title>Arabidopsis AtMORC4 and AtMORC7 form nuclear bodies and repress a large number of protein-coding genes.</title>
        <authorList>
            <person name="Harris C.J."/>
            <person name="Husmann D."/>
            <person name="Liu W."/>
            <person name="Kasmi F.E."/>
            <person name="Wang H."/>
            <person name="Papikian A."/>
            <person name="Pastor W.A."/>
            <person name="Moissiard G."/>
            <person name="Vashisht A.A."/>
            <person name="Dangl J.L."/>
            <person name="Wohlschlegel J.A."/>
            <person name="Jacobsen S.E."/>
        </authorList>
    </citation>
    <scope>FUNCTION</scope>
    <scope>DISRUPTION PHENOTYPE</scope>
    <scope>SUBUNIT</scope>
    <scope>SUBCELLULAR LOCATION</scope>
    <source>
        <strain>cv. Columbia</strain>
    </source>
</reference>
<accession>F4JRS4</accession>
<accession>Q9SW29</accession>
<feature type="chain" id="PRO_0000434982" description="Protein MICRORCHIDIA 7">
    <location>
        <begin position="1"/>
        <end position="707"/>
    </location>
</feature>
<feature type="region of interest" description="Disordered" evidence="4">
    <location>
        <begin position="1"/>
        <end position="22"/>
    </location>
</feature>
<feature type="region of interest" description="Disordered" evidence="4">
    <location>
        <begin position="568"/>
        <end position="619"/>
    </location>
</feature>
<feature type="coiled-coil region" evidence="2">
    <location>
        <begin position="620"/>
        <end position="701"/>
    </location>
</feature>
<feature type="short sequence motif" description="Nuclear localization signal" evidence="3">
    <location>
        <begin position="633"/>
        <end position="640"/>
    </location>
</feature>
<feature type="compositionally biased region" description="Basic and acidic residues" evidence="4">
    <location>
        <begin position="1"/>
        <end position="11"/>
    </location>
</feature>
<feature type="compositionally biased region" description="Basic and acidic residues" evidence="4">
    <location>
        <begin position="575"/>
        <end position="587"/>
    </location>
</feature>
<feature type="compositionally biased region" description="Polar residues" evidence="4">
    <location>
        <begin position="590"/>
        <end position="613"/>
    </location>
</feature>
<evidence type="ECO:0000250" key="1">
    <source>
        <dbReference type="UniProtKB" id="Q84WV6"/>
    </source>
</evidence>
<evidence type="ECO:0000255" key="2"/>
<evidence type="ECO:0000255" key="3">
    <source>
        <dbReference type="PROSITE-ProRule" id="PRU00768"/>
    </source>
</evidence>
<evidence type="ECO:0000256" key="4">
    <source>
        <dbReference type="SAM" id="MobiDB-lite"/>
    </source>
</evidence>
<evidence type="ECO:0000269" key="5">
    <source>
    </source>
</evidence>
<evidence type="ECO:0000303" key="6">
    <source>
    </source>
</evidence>
<evidence type="ECO:0000303" key="7">
    <source>
    </source>
</evidence>
<evidence type="ECO:0000305" key="8"/>
<evidence type="ECO:0000312" key="9">
    <source>
        <dbReference type="Araport" id="AT4G24970"/>
    </source>
</evidence>
<evidence type="ECO:0000312" key="10">
    <source>
        <dbReference type="EMBL" id="CAB36739.1"/>
    </source>
</evidence>
<evidence type="ECO:0000312" key="11">
    <source>
        <dbReference type="Proteomes" id="UP000006548"/>
    </source>
</evidence>
<proteinExistence type="evidence at protein level"/>
<name>MORC7_ARATH</name>
<comment type="function">
    <text evidence="1 5">Exhibits ATPase activity. Binds DNA/RNA in a non-specific manner and exhibits endonuclease activity. Probably involved in DNA repair. Involved in RNA-directed DNA methylation (RdDM) as a component of the RdDM machinery and required for gene silencing. May also be involved in the regulation of chromatin architecture to maintain gene silencing. Together with MORC4, acts to suppress a wide set of non-methylated protein-coding genes, especially involved in pathogen response. Positive regulators of defense against the oomycete Hyaloperonospora arabidopsidis (Hpa) (PubMed:27171361).</text>
</comment>
<comment type="cofactor">
    <cofactor evidence="1">
        <name>Mg(2+)</name>
        <dbReference type="ChEBI" id="CHEBI:18420"/>
    </cofactor>
    <cofactor evidence="1">
        <name>Mn(2+)</name>
        <dbReference type="ChEBI" id="CHEBI:29035"/>
    </cofactor>
</comment>
<comment type="subunit">
    <text evidence="1 5">Homodimer and heterodimer. Component of an RNA-directed DNA methylation (RdDM) complex. Forms homomeric complexes (PubMed:27171361).</text>
</comment>
<comment type="subcellular location">
    <subcellularLocation>
        <location evidence="3 5">Nucleus</location>
    </subcellularLocation>
    <text evidence="5">Accumulates in discrete nuclear bodies adjacent to chromocenters.</text>
</comment>
<comment type="disruption phenotype">
    <text evidence="5">The double mutant atmorc4 atmorc7 exhibits a pathogen response phenotype with abnormal up-regulation of several genes involved in plant defense.</text>
</comment>
<comment type="similarity">
    <text evidence="8">Belongs to the MORC ATPase protein family.</text>
</comment>
<comment type="sequence caution" evidence="8">
    <conflict type="erroneous gene model prediction">
        <sequence resource="EMBL-CDS" id="CAB36739"/>
    </conflict>
</comment>
<comment type="sequence caution" evidence="8">
    <conflict type="erroneous gene model prediction">
        <sequence resource="EMBL-CDS" id="CAB79406"/>
    </conflict>
</comment>
<sequence length="707" mass="79573">MDNSIHVKREIQLPSTSPAGFPGRESVTVVDLCSSDDDSDIGEVAGGLEKVGNNFVGLKRGRDTFGGSSEVDRNNVKKVTTLAELGVGLPEGFGQSNPPESLTHPIPANPCNVFRPVPPPPPPPYAGTSGKIGGCKQFWKAGDYEGAAGDNWDLSSGGFDHVRVHPKFLHSNATSHKWALGAFAELLDNALDEVASGATYVKVDMLENNKGGNRMLLIEDNGGGMDPEKMRQCMSLGYSAKSKLANTIGQYGNGFKTSTMRLGADVIVFSRCPGKDGKSSTQSIGLLSYTFLRSTGKEDIVVPMLDYERRDPEWSKIIRSSTRDWDKNVETIIQWSPFSSEEDLLHQFDLMKDRGTRIIIYNLWEDDQGMLELDFDADPYDIQLRGVNREERNIKMASQFPNSRHFLTYKHSLRSYVSILYLRIPPGFRIILRGIDVEHHSVVNDMMQTEQITYRPQSESYGVVTNMSAIVIIGFVKDAKHHVDVQGFNVYHKNRLIKPFWRIWNATGSDGRGVIGVLEANFVEPAHDKQGFERTTVLARLESRLVQMQKTYWSTNCHKIGYAPRRREKSAYGYDNRDSSPENDREGPSSIKTPTPASDKFYSSSYPNHNGDNGVSGKDGARLQEELRREKERRKALEVEVQLSRQKIEEMKKEQENLIEIFSEERDRRDGEEEVLRNKLEEASNTIDDLLNKIKKMEGSKVPSWRH</sequence>
<organism evidence="11">
    <name type="scientific">Arabidopsis thaliana</name>
    <name type="common">Mouse-ear cress</name>
    <dbReference type="NCBI Taxonomy" id="3702"/>
    <lineage>
        <taxon>Eukaryota</taxon>
        <taxon>Viridiplantae</taxon>
        <taxon>Streptophyta</taxon>
        <taxon>Embryophyta</taxon>
        <taxon>Tracheophyta</taxon>
        <taxon>Spermatophyta</taxon>
        <taxon>Magnoliopsida</taxon>
        <taxon>eudicotyledons</taxon>
        <taxon>Gunneridae</taxon>
        <taxon>Pentapetalae</taxon>
        <taxon>rosids</taxon>
        <taxon>malvids</taxon>
        <taxon>Brassicales</taxon>
        <taxon>Brassicaceae</taxon>
        <taxon>Camelineae</taxon>
        <taxon>Arabidopsis</taxon>
    </lineage>
</organism>
<dbReference type="EC" id="3.6.-.-"/>
<dbReference type="EMBL" id="AL035523">
    <property type="protein sequence ID" value="CAB36739.1"/>
    <property type="status" value="ALT_SEQ"/>
    <property type="molecule type" value="Genomic_DNA"/>
</dbReference>
<dbReference type="EMBL" id="AL161562">
    <property type="protein sequence ID" value="CAB79406.1"/>
    <property type="status" value="ALT_SEQ"/>
    <property type="molecule type" value="Genomic_DNA"/>
</dbReference>
<dbReference type="EMBL" id="CP002687">
    <property type="protein sequence ID" value="AEE84983.1"/>
    <property type="molecule type" value="Genomic_DNA"/>
</dbReference>
<dbReference type="PIR" id="T05518">
    <property type="entry name" value="T05518"/>
</dbReference>
<dbReference type="RefSeq" id="NP_194227.2">
    <property type="nucleotide sequence ID" value="NM_118629.3"/>
</dbReference>
<dbReference type="SMR" id="F4JRS4"/>
<dbReference type="FunCoup" id="F4JRS4">
    <property type="interactions" value="1739"/>
</dbReference>
<dbReference type="STRING" id="3702.F4JRS4"/>
<dbReference type="iPTMnet" id="F4JRS4"/>
<dbReference type="PaxDb" id="3702-AT4G24970.1"/>
<dbReference type="ProteomicsDB" id="238302"/>
<dbReference type="EnsemblPlants" id="AT4G24970.1">
    <property type="protein sequence ID" value="AT4G24970.1"/>
    <property type="gene ID" value="AT4G24970"/>
</dbReference>
<dbReference type="GeneID" id="828599"/>
<dbReference type="Gramene" id="AT4G24970.1">
    <property type="protein sequence ID" value="AT4G24970.1"/>
    <property type="gene ID" value="AT4G24970"/>
</dbReference>
<dbReference type="KEGG" id="ath:AT4G24970"/>
<dbReference type="Araport" id="AT4G24970"/>
<dbReference type="TAIR" id="AT4G24970">
    <property type="gene designation" value="ATMORC7"/>
</dbReference>
<dbReference type="eggNOG" id="KOG1845">
    <property type="taxonomic scope" value="Eukaryota"/>
</dbReference>
<dbReference type="HOGENOM" id="CLU_011516_6_0_1"/>
<dbReference type="InParanoid" id="F4JRS4"/>
<dbReference type="OMA" id="AYWSINC"/>
<dbReference type="PRO" id="PR:F4JRS4"/>
<dbReference type="Proteomes" id="UP000006548">
    <property type="component" value="Chromosome 4"/>
</dbReference>
<dbReference type="ExpressionAtlas" id="F4JRS4">
    <property type="expression patterns" value="baseline and differential"/>
</dbReference>
<dbReference type="GO" id="GO:0016604">
    <property type="term" value="C:nuclear body"/>
    <property type="evidence" value="ECO:0000314"/>
    <property type="project" value="UniProtKB"/>
</dbReference>
<dbReference type="GO" id="GO:0005654">
    <property type="term" value="C:nucleoplasm"/>
    <property type="evidence" value="ECO:0000314"/>
    <property type="project" value="TAIR"/>
</dbReference>
<dbReference type="GO" id="GO:0005634">
    <property type="term" value="C:nucleus"/>
    <property type="evidence" value="ECO:0000250"/>
    <property type="project" value="UniProtKB"/>
</dbReference>
<dbReference type="GO" id="GO:0005524">
    <property type="term" value="F:ATP binding"/>
    <property type="evidence" value="ECO:0007669"/>
    <property type="project" value="UniProtKB-KW"/>
</dbReference>
<dbReference type="GO" id="GO:0016887">
    <property type="term" value="F:ATP hydrolysis activity"/>
    <property type="evidence" value="ECO:0000250"/>
    <property type="project" value="UniProtKB"/>
</dbReference>
<dbReference type="GO" id="GO:0003677">
    <property type="term" value="F:DNA binding"/>
    <property type="evidence" value="ECO:0000250"/>
    <property type="project" value="UniProtKB"/>
</dbReference>
<dbReference type="GO" id="GO:0004519">
    <property type="term" value="F:endonuclease activity"/>
    <property type="evidence" value="ECO:0000250"/>
    <property type="project" value="UniProtKB"/>
</dbReference>
<dbReference type="GO" id="GO:0016301">
    <property type="term" value="F:kinase activity"/>
    <property type="evidence" value="ECO:0007669"/>
    <property type="project" value="UniProtKB-KW"/>
</dbReference>
<dbReference type="GO" id="GO:0003723">
    <property type="term" value="F:RNA binding"/>
    <property type="evidence" value="ECO:0000250"/>
    <property type="project" value="UniProtKB"/>
</dbReference>
<dbReference type="GO" id="GO:0006952">
    <property type="term" value="P:defense response"/>
    <property type="evidence" value="ECO:0007669"/>
    <property type="project" value="UniProtKB-KW"/>
</dbReference>
<dbReference type="GO" id="GO:0006281">
    <property type="term" value="P:DNA repair"/>
    <property type="evidence" value="ECO:0007669"/>
    <property type="project" value="UniProtKB-KW"/>
</dbReference>
<dbReference type="GO" id="GO:0080188">
    <property type="term" value="P:gene silencing by siRNA-directed DNA methylation"/>
    <property type="evidence" value="ECO:0000315"/>
    <property type="project" value="UniProtKB"/>
</dbReference>
<dbReference type="GO" id="GO:1902290">
    <property type="term" value="P:positive regulation of defense response to oomycetes"/>
    <property type="evidence" value="ECO:0000315"/>
    <property type="project" value="UniProtKB"/>
</dbReference>
<dbReference type="GO" id="GO:0006282">
    <property type="term" value="P:regulation of DNA repair"/>
    <property type="evidence" value="ECO:0000250"/>
    <property type="project" value="UniProtKB"/>
</dbReference>
<dbReference type="GO" id="GO:0060966">
    <property type="term" value="P:regulation of gene silencing by regulatory ncRNA"/>
    <property type="evidence" value="ECO:0000250"/>
    <property type="project" value="UniProtKB"/>
</dbReference>
<dbReference type="FunFam" id="3.30.565.10:FF:000075">
    <property type="entry name" value="MORC family CW-type zinc finger protein 4"/>
    <property type="match status" value="1"/>
</dbReference>
<dbReference type="Gene3D" id="3.30.565.10">
    <property type="entry name" value="Histidine kinase-like ATPase, C-terminal domain"/>
    <property type="match status" value="1"/>
</dbReference>
<dbReference type="InterPro" id="IPR036890">
    <property type="entry name" value="HATPase_C_sf"/>
</dbReference>
<dbReference type="InterPro" id="IPR045261">
    <property type="entry name" value="MORC_ATPase"/>
</dbReference>
<dbReference type="InterPro" id="IPR041006">
    <property type="entry name" value="Morc_S5"/>
</dbReference>
<dbReference type="PANTHER" id="PTHR23336:SF78">
    <property type="entry name" value="PROTEIN MICRORCHIDIA 7"/>
    <property type="match status" value="1"/>
</dbReference>
<dbReference type="PANTHER" id="PTHR23336">
    <property type="entry name" value="ZINC FINGER CW-TYPE COILED-COIL DOMAIN PROTEIN 3"/>
    <property type="match status" value="1"/>
</dbReference>
<dbReference type="Pfam" id="PF13589">
    <property type="entry name" value="HATPase_c_3"/>
    <property type="match status" value="1"/>
</dbReference>
<dbReference type="Pfam" id="PF17942">
    <property type="entry name" value="Morc6_S5"/>
    <property type="match status" value="1"/>
</dbReference>
<dbReference type="SUPFAM" id="SSF55874">
    <property type="entry name" value="ATPase domain of HSP90 chaperone/DNA topoisomerase II/histidine kinase"/>
    <property type="match status" value="1"/>
</dbReference>
<protein>
    <recommendedName>
        <fullName evidence="7">Protein MICRORCHIDIA 7</fullName>
        <shortName evidence="7">AtMORC7</shortName>
        <ecNumber>3.6.-.-</ecNumber>
    </recommendedName>
    <alternativeName>
        <fullName evidence="6">Protein CRT1-homolog 3</fullName>
        <shortName evidence="6">CRT1-h3</shortName>
    </alternativeName>
</protein>
<gene>
    <name evidence="7" type="primary">MORC7</name>
    <name evidence="6" type="synonym">CRH3</name>
    <name evidence="9" type="ordered locus">At4g24970</name>
    <name evidence="10" type="ORF">F13M23.110</name>
</gene>